<evidence type="ECO:0000250" key="1"/>
<evidence type="ECO:0000255" key="2">
    <source>
        <dbReference type="PROSITE-ProRule" id="PRU01082"/>
    </source>
</evidence>
<evidence type="ECO:0000305" key="3"/>
<feature type="chain" id="PRO_0000363274" description="Probable protein phosphatase 2C 28">
    <location>
        <begin position="1"/>
        <end position="399"/>
    </location>
</feature>
<feature type="domain" description="PPM-type phosphatase" evidence="2">
    <location>
        <begin position="48"/>
        <end position="356"/>
    </location>
</feature>
<feature type="binding site" evidence="1">
    <location>
        <position position="87"/>
    </location>
    <ligand>
        <name>Mn(2+)</name>
        <dbReference type="ChEBI" id="CHEBI:29035"/>
        <label>1</label>
    </ligand>
</feature>
<feature type="binding site" evidence="1">
    <location>
        <position position="87"/>
    </location>
    <ligand>
        <name>Mn(2+)</name>
        <dbReference type="ChEBI" id="CHEBI:29035"/>
        <label>2</label>
    </ligand>
</feature>
<feature type="binding site" evidence="1">
    <location>
        <position position="88"/>
    </location>
    <ligand>
        <name>Mn(2+)</name>
        <dbReference type="ChEBI" id="CHEBI:29035"/>
        <label>1</label>
    </ligand>
</feature>
<feature type="binding site" evidence="1">
    <location>
        <position position="288"/>
    </location>
    <ligand>
        <name>Mn(2+)</name>
        <dbReference type="ChEBI" id="CHEBI:29035"/>
        <label>2</label>
    </ligand>
</feature>
<feature type="binding site" evidence="1">
    <location>
        <position position="347"/>
    </location>
    <ligand>
        <name>Mn(2+)</name>
        <dbReference type="ChEBI" id="CHEBI:29035"/>
        <label>2</label>
    </ligand>
</feature>
<proteinExistence type="evidence at transcript level"/>
<dbReference type="EC" id="3.1.3.16"/>
<dbReference type="EMBL" id="DP000009">
    <property type="protein sequence ID" value="ABF93863.1"/>
    <property type="molecule type" value="Genomic_DNA"/>
</dbReference>
<dbReference type="EMBL" id="DP000009">
    <property type="protein sequence ID" value="ABF93864.1"/>
    <property type="status" value="ALT_SEQ"/>
    <property type="molecule type" value="Genomic_DNA"/>
</dbReference>
<dbReference type="EMBL" id="DP000009">
    <property type="protein sequence ID" value="ABF93865.1"/>
    <property type="status" value="ALT_SEQ"/>
    <property type="molecule type" value="Genomic_DNA"/>
</dbReference>
<dbReference type="EMBL" id="AP008209">
    <property type="protein sequence ID" value="BAF10813.1"/>
    <property type="molecule type" value="Genomic_DNA"/>
</dbReference>
<dbReference type="EMBL" id="AP014959">
    <property type="protein sequence ID" value="BAS82191.1"/>
    <property type="molecule type" value="Genomic_DNA"/>
</dbReference>
<dbReference type="EMBL" id="AK065303">
    <property type="status" value="NOT_ANNOTATED_CDS"/>
    <property type="molecule type" value="mRNA"/>
</dbReference>
<dbReference type="RefSeq" id="XP_015631014.1">
    <property type="nucleotide sequence ID" value="XM_015775528.1"/>
</dbReference>
<dbReference type="SMR" id="Q10S32"/>
<dbReference type="FunCoup" id="Q10S32">
    <property type="interactions" value="1038"/>
</dbReference>
<dbReference type="STRING" id="39947.Q10S32"/>
<dbReference type="PaxDb" id="39947-Q10S32"/>
<dbReference type="DNASU" id="4331548"/>
<dbReference type="EnsemblPlants" id="Os03t0137200-01">
    <property type="protein sequence ID" value="Os03t0137200-01"/>
    <property type="gene ID" value="Os03g0137200"/>
</dbReference>
<dbReference type="Gramene" id="Os03t0137200-01">
    <property type="protein sequence ID" value="Os03t0137200-01"/>
    <property type="gene ID" value="Os03g0137200"/>
</dbReference>
<dbReference type="KEGG" id="dosa:Os03g0137200"/>
<dbReference type="KEGG" id="osa:4331548"/>
<dbReference type="eggNOG" id="KOG0700">
    <property type="taxonomic scope" value="Eukaryota"/>
</dbReference>
<dbReference type="HOGENOM" id="CLU_013173_2_0_1"/>
<dbReference type="InParanoid" id="Q10S32"/>
<dbReference type="OMA" id="HPESCYV"/>
<dbReference type="OrthoDB" id="420076at2759"/>
<dbReference type="Proteomes" id="UP000000763">
    <property type="component" value="Chromosome 3"/>
</dbReference>
<dbReference type="Proteomes" id="UP000059680">
    <property type="component" value="Chromosome 3"/>
</dbReference>
<dbReference type="ExpressionAtlas" id="Q10S32">
    <property type="expression patterns" value="baseline and differential"/>
</dbReference>
<dbReference type="GO" id="GO:0046872">
    <property type="term" value="F:metal ion binding"/>
    <property type="evidence" value="ECO:0007669"/>
    <property type="project" value="UniProtKB-KW"/>
</dbReference>
<dbReference type="GO" id="GO:0004722">
    <property type="term" value="F:protein serine/threonine phosphatase activity"/>
    <property type="evidence" value="ECO:0000318"/>
    <property type="project" value="GO_Central"/>
</dbReference>
<dbReference type="GO" id="GO:1902531">
    <property type="term" value="P:regulation of intracellular signal transduction"/>
    <property type="evidence" value="ECO:0000318"/>
    <property type="project" value="GO_Central"/>
</dbReference>
<dbReference type="CDD" id="cd00143">
    <property type="entry name" value="PP2Cc"/>
    <property type="match status" value="1"/>
</dbReference>
<dbReference type="FunFam" id="3.60.40.10:FF:000008">
    <property type="entry name" value="Phosphatase 2C family protein"/>
    <property type="match status" value="1"/>
</dbReference>
<dbReference type="Gene3D" id="3.60.40.10">
    <property type="entry name" value="PPM-type phosphatase domain"/>
    <property type="match status" value="1"/>
</dbReference>
<dbReference type="InterPro" id="IPR015655">
    <property type="entry name" value="PP2C"/>
</dbReference>
<dbReference type="InterPro" id="IPR000222">
    <property type="entry name" value="PP2C_BS"/>
</dbReference>
<dbReference type="InterPro" id="IPR036457">
    <property type="entry name" value="PPM-type-like_dom_sf"/>
</dbReference>
<dbReference type="InterPro" id="IPR001932">
    <property type="entry name" value="PPM-type_phosphatase-like_dom"/>
</dbReference>
<dbReference type="PANTHER" id="PTHR47992">
    <property type="entry name" value="PROTEIN PHOSPHATASE"/>
    <property type="match status" value="1"/>
</dbReference>
<dbReference type="Pfam" id="PF00481">
    <property type="entry name" value="PP2C"/>
    <property type="match status" value="1"/>
</dbReference>
<dbReference type="SMART" id="SM00332">
    <property type="entry name" value="PP2Cc"/>
    <property type="match status" value="1"/>
</dbReference>
<dbReference type="SUPFAM" id="SSF81606">
    <property type="entry name" value="PP2C-like"/>
    <property type="match status" value="1"/>
</dbReference>
<dbReference type="PROSITE" id="PS01032">
    <property type="entry name" value="PPM_1"/>
    <property type="match status" value="1"/>
</dbReference>
<dbReference type="PROSITE" id="PS51746">
    <property type="entry name" value="PPM_2"/>
    <property type="match status" value="1"/>
</dbReference>
<protein>
    <recommendedName>
        <fullName>Probable protein phosphatase 2C 28</fullName>
        <shortName>OsPP2C28</shortName>
        <ecNumber>3.1.3.16</ecNumber>
    </recommendedName>
</protein>
<reference key="1">
    <citation type="journal article" date="2005" name="Genome Res.">
        <title>Sequence, annotation, and analysis of synteny between rice chromosome 3 and diverged grass species.</title>
        <authorList>
            <consortium name="The rice chromosome 3 sequencing consortium"/>
            <person name="Buell C.R."/>
            <person name="Yuan Q."/>
            <person name="Ouyang S."/>
            <person name="Liu J."/>
            <person name="Zhu W."/>
            <person name="Wang A."/>
            <person name="Maiti R."/>
            <person name="Haas B."/>
            <person name="Wortman J."/>
            <person name="Pertea M."/>
            <person name="Jones K.M."/>
            <person name="Kim M."/>
            <person name="Overton L."/>
            <person name="Tsitrin T."/>
            <person name="Fadrosh D."/>
            <person name="Bera J."/>
            <person name="Weaver B."/>
            <person name="Jin S."/>
            <person name="Johri S."/>
            <person name="Reardon M."/>
            <person name="Webb K."/>
            <person name="Hill J."/>
            <person name="Moffat K."/>
            <person name="Tallon L."/>
            <person name="Van Aken S."/>
            <person name="Lewis M."/>
            <person name="Utterback T."/>
            <person name="Feldblyum T."/>
            <person name="Zismann V."/>
            <person name="Iobst S."/>
            <person name="Hsiao J."/>
            <person name="de Vazeille A.R."/>
            <person name="Salzberg S.L."/>
            <person name="White O."/>
            <person name="Fraser C.M."/>
            <person name="Yu Y."/>
            <person name="Kim H."/>
            <person name="Rambo T."/>
            <person name="Currie J."/>
            <person name="Collura K."/>
            <person name="Kernodle-Thompson S."/>
            <person name="Wei F."/>
            <person name="Kudrna K."/>
            <person name="Ammiraju J.S.S."/>
            <person name="Luo M."/>
            <person name="Goicoechea J.L."/>
            <person name="Wing R.A."/>
            <person name="Henry D."/>
            <person name="Oates R."/>
            <person name="Palmer M."/>
            <person name="Pries G."/>
            <person name="Saski C."/>
            <person name="Simmons J."/>
            <person name="Soderlund C."/>
            <person name="Nelson W."/>
            <person name="de la Bastide M."/>
            <person name="Spiegel L."/>
            <person name="Nascimento L."/>
            <person name="Huang E."/>
            <person name="Preston R."/>
            <person name="Zutavern T."/>
            <person name="Palmer L."/>
            <person name="O'Shaughnessy A."/>
            <person name="Dike S."/>
            <person name="McCombie W.R."/>
            <person name="Minx P."/>
            <person name="Cordum H."/>
            <person name="Wilson R."/>
            <person name="Jin W."/>
            <person name="Lee H.R."/>
            <person name="Jiang J."/>
            <person name="Jackson S."/>
        </authorList>
    </citation>
    <scope>NUCLEOTIDE SEQUENCE [LARGE SCALE GENOMIC DNA]</scope>
    <source>
        <strain>cv. Nipponbare</strain>
    </source>
</reference>
<reference key="2">
    <citation type="journal article" date="2005" name="Nature">
        <title>The map-based sequence of the rice genome.</title>
        <authorList>
            <consortium name="International rice genome sequencing project (IRGSP)"/>
        </authorList>
    </citation>
    <scope>NUCLEOTIDE SEQUENCE [LARGE SCALE GENOMIC DNA]</scope>
    <source>
        <strain>cv. Nipponbare</strain>
    </source>
</reference>
<reference key="3">
    <citation type="journal article" date="2008" name="Nucleic Acids Res.">
        <title>The rice annotation project database (RAP-DB): 2008 update.</title>
        <authorList>
            <consortium name="The rice annotation project (RAP)"/>
        </authorList>
    </citation>
    <scope>GENOME REANNOTATION</scope>
    <source>
        <strain>cv. Nipponbare</strain>
    </source>
</reference>
<reference key="4">
    <citation type="journal article" date="2013" name="Rice">
        <title>Improvement of the Oryza sativa Nipponbare reference genome using next generation sequence and optical map data.</title>
        <authorList>
            <person name="Kawahara Y."/>
            <person name="de la Bastide M."/>
            <person name="Hamilton J.P."/>
            <person name="Kanamori H."/>
            <person name="McCombie W.R."/>
            <person name="Ouyang S."/>
            <person name="Schwartz D.C."/>
            <person name="Tanaka T."/>
            <person name="Wu J."/>
            <person name="Zhou S."/>
            <person name="Childs K.L."/>
            <person name="Davidson R.M."/>
            <person name="Lin H."/>
            <person name="Quesada-Ocampo L."/>
            <person name="Vaillancourt B."/>
            <person name="Sakai H."/>
            <person name="Lee S.S."/>
            <person name="Kim J."/>
            <person name="Numa H."/>
            <person name="Itoh T."/>
            <person name="Buell C.R."/>
            <person name="Matsumoto T."/>
        </authorList>
    </citation>
    <scope>GENOME REANNOTATION</scope>
    <source>
        <strain>cv. Nipponbare</strain>
    </source>
</reference>
<reference key="5">
    <citation type="journal article" date="2003" name="Science">
        <title>Collection, mapping, and annotation of over 28,000 cDNA clones from japonica rice.</title>
        <authorList>
            <consortium name="The rice full-length cDNA consortium"/>
        </authorList>
    </citation>
    <scope>NUCLEOTIDE SEQUENCE [LARGE SCALE MRNA]</scope>
    <source>
        <strain>cv. Nipponbare</strain>
    </source>
</reference>
<reference key="6">
    <citation type="journal article" date="2008" name="BMC Genomics">
        <title>Genome-wide and expression analysis of protein phosphatase 2C in rice and Arabidopsis.</title>
        <authorList>
            <person name="Xue T."/>
            <person name="Wang D."/>
            <person name="Zhang S."/>
            <person name="Ehlting J."/>
            <person name="Ni F."/>
            <person name="Jacab S."/>
            <person name="Zheng C."/>
            <person name="Zhong Y."/>
        </authorList>
    </citation>
    <scope>GENE FAMILY</scope>
    <scope>NOMENCLATURE</scope>
</reference>
<sequence length="399" mass="44289">MLAAVMDYFRSCWGPRSPAGHRVRGSDVAGRQDGLLWYKDAGQLVTGEFSMAVVQANNLLEDQSQVESGALSMAEPGPQGTFIGVYDGHGGPETARFINDHMFHHLRRFATEHKCMSTDVIRKAFQATEEGFLSLVSKQWSLKPQIAAVGSCCLVGVICSGTLYVANLGDSRAVLGRFVKSTGEVVATQLSSEHNACYEEVRQELQASHPDDPQIVVLKHNVWRVKGLIQISRSIGDVYLKRPEYNREPLHSKFRLRETFKRPILSSEPAIAVHQIQPNDHFVIFASDGLWEHLSNQEAVDLVQNNPRNGIARRLVKVAMQEAAKKREMRYSDLKKIDRGVRRHFHDDITVIVVFLDSNAISKANWSRGPSVSLRGGGVTLPANSLAPFSTPTVLSSTY</sequence>
<organism>
    <name type="scientific">Oryza sativa subsp. japonica</name>
    <name type="common">Rice</name>
    <dbReference type="NCBI Taxonomy" id="39947"/>
    <lineage>
        <taxon>Eukaryota</taxon>
        <taxon>Viridiplantae</taxon>
        <taxon>Streptophyta</taxon>
        <taxon>Embryophyta</taxon>
        <taxon>Tracheophyta</taxon>
        <taxon>Spermatophyta</taxon>
        <taxon>Magnoliopsida</taxon>
        <taxon>Liliopsida</taxon>
        <taxon>Poales</taxon>
        <taxon>Poaceae</taxon>
        <taxon>BOP clade</taxon>
        <taxon>Oryzoideae</taxon>
        <taxon>Oryzeae</taxon>
        <taxon>Oryzinae</taxon>
        <taxon>Oryza</taxon>
        <taxon>Oryza sativa</taxon>
    </lineage>
</organism>
<gene>
    <name type="ordered locus">Os03g0137200</name>
    <name type="ordered locus">LOC_Os03g04430</name>
</gene>
<comment type="catalytic activity">
    <reaction>
        <text>O-phospho-L-seryl-[protein] + H2O = L-seryl-[protein] + phosphate</text>
        <dbReference type="Rhea" id="RHEA:20629"/>
        <dbReference type="Rhea" id="RHEA-COMP:9863"/>
        <dbReference type="Rhea" id="RHEA-COMP:11604"/>
        <dbReference type="ChEBI" id="CHEBI:15377"/>
        <dbReference type="ChEBI" id="CHEBI:29999"/>
        <dbReference type="ChEBI" id="CHEBI:43474"/>
        <dbReference type="ChEBI" id="CHEBI:83421"/>
        <dbReference type="EC" id="3.1.3.16"/>
    </reaction>
</comment>
<comment type="catalytic activity">
    <reaction>
        <text>O-phospho-L-threonyl-[protein] + H2O = L-threonyl-[protein] + phosphate</text>
        <dbReference type="Rhea" id="RHEA:47004"/>
        <dbReference type="Rhea" id="RHEA-COMP:11060"/>
        <dbReference type="Rhea" id="RHEA-COMP:11605"/>
        <dbReference type="ChEBI" id="CHEBI:15377"/>
        <dbReference type="ChEBI" id="CHEBI:30013"/>
        <dbReference type="ChEBI" id="CHEBI:43474"/>
        <dbReference type="ChEBI" id="CHEBI:61977"/>
        <dbReference type="EC" id="3.1.3.16"/>
    </reaction>
</comment>
<comment type="cofactor">
    <cofactor evidence="1">
        <name>Mg(2+)</name>
        <dbReference type="ChEBI" id="CHEBI:18420"/>
    </cofactor>
    <cofactor evidence="1">
        <name>Mn(2+)</name>
        <dbReference type="ChEBI" id="CHEBI:29035"/>
    </cofactor>
    <text evidence="1">Binds 2 magnesium or manganese ions per subunit.</text>
</comment>
<comment type="similarity">
    <text evidence="3">Belongs to the PP2C family.</text>
</comment>
<comment type="sequence caution" evidence="3">
    <conflict type="erroneous gene model prediction">
        <sequence resource="EMBL-CDS" id="ABF93864"/>
    </conflict>
</comment>
<comment type="sequence caution" evidence="3">
    <conflict type="erroneous gene model prediction">
        <sequence resource="EMBL-CDS" id="ABF93865"/>
    </conflict>
</comment>
<comment type="sequence caution" evidence="3">
    <conflict type="frameshift">
        <sequence resource="EMBL" id="AK065303"/>
    </conflict>
</comment>
<name>P2C28_ORYSJ</name>
<keyword id="KW-0378">Hydrolase</keyword>
<keyword id="KW-0460">Magnesium</keyword>
<keyword id="KW-0464">Manganese</keyword>
<keyword id="KW-0479">Metal-binding</keyword>
<keyword id="KW-0904">Protein phosphatase</keyword>
<keyword id="KW-1185">Reference proteome</keyword>
<accession>Q10S32</accession>
<accession>A0A0P0VT02</accession>
<accession>Q10S30</accession>
<accession>Q10S31</accession>